<accession>Q8D2U2</accession>
<name>RS6_WIGBR</name>
<protein>
    <recommendedName>
        <fullName evidence="1">Small ribosomal subunit protein bS6</fullName>
    </recommendedName>
    <alternativeName>
        <fullName evidence="2">30S ribosomal protein S6</fullName>
    </alternativeName>
</protein>
<proteinExistence type="inferred from homology"/>
<comment type="function">
    <text evidence="1">Binds together with bS18 to 16S ribosomal RNA.</text>
</comment>
<comment type="similarity">
    <text evidence="1">Belongs to the bacterial ribosomal protein bS6 family.</text>
</comment>
<organism>
    <name type="scientific">Wigglesworthia glossinidia brevipalpis</name>
    <dbReference type="NCBI Taxonomy" id="36870"/>
    <lineage>
        <taxon>Bacteria</taxon>
        <taxon>Pseudomonadati</taxon>
        <taxon>Pseudomonadota</taxon>
        <taxon>Gammaproteobacteria</taxon>
        <taxon>Enterobacterales</taxon>
        <taxon>Erwiniaceae</taxon>
        <taxon>Wigglesworthia</taxon>
    </lineage>
</organism>
<reference key="1">
    <citation type="journal article" date="2002" name="Nat. Genet.">
        <title>Genome sequence of the endocellular obligate symbiont of tsetse flies, Wigglesworthia glossinidia.</title>
        <authorList>
            <person name="Akman L."/>
            <person name="Yamashita A."/>
            <person name="Watanabe H."/>
            <person name="Oshima K."/>
            <person name="Shiba T."/>
            <person name="Hattori M."/>
            <person name="Aksoy S."/>
        </authorList>
    </citation>
    <scope>NUCLEOTIDE SEQUENCE [LARGE SCALE GENOMIC DNA]</scope>
</reference>
<dbReference type="EMBL" id="BA000021">
    <property type="protein sequence ID" value="BAC24408.1"/>
    <property type="molecule type" value="Genomic_DNA"/>
</dbReference>
<dbReference type="SMR" id="Q8D2U2"/>
<dbReference type="STRING" id="36870.gene:10368755"/>
<dbReference type="KEGG" id="wbr:rpsF"/>
<dbReference type="eggNOG" id="COG0360">
    <property type="taxonomic scope" value="Bacteria"/>
</dbReference>
<dbReference type="HOGENOM" id="CLU_113441_6_1_6"/>
<dbReference type="OrthoDB" id="9812702at2"/>
<dbReference type="Proteomes" id="UP000000562">
    <property type="component" value="Chromosome"/>
</dbReference>
<dbReference type="GO" id="GO:0022627">
    <property type="term" value="C:cytosolic small ribosomal subunit"/>
    <property type="evidence" value="ECO:0007669"/>
    <property type="project" value="TreeGrafter"/>
</dbReference>
<dbReference type="GO" id="GO:0070181">
    <property type="term" value="F:small ribosomal subunit rRNA binding"/>
    <property type="evidence" value="ECO:0007669"/>
    <property type="project" value="TreeGrafter"/>
</dbReference>
<dbReference type="GO" id="GO:0003735">
    <property type="term" value="F:structural constituent of ribosome"/>
    <property type="evidence" value="ECO:0007669"/>
    <property type="project" value="InterPro"/>
</dbReference>
<dbReference type="GO" id="GO:0006412">
    <property type="term" value="P:translation"/>
    <property type="evidence" value="ECO:0007669"/>
    <property type="project" value="UniProtKB-UniRule"/>
</dbReference>
<dbReference type="CDD" id="cd00473">
    <property type="entry name" value="bS6"/>
    <property type="match status" value="1"/>
</dbReference>
<dbReference type="Gene3D" id="3.30.70.60">
    <property type="match status" value="1"/>
</dbReference>
<dbReference type="HAMAP" id="MF_00360">
    <property type="entry name" value="Ribosomal_bS6"/>
    <property type="match status" value="1"/>
</dbReference>
<dbReference type="InterPro" id="IPR000529">
    <property type="entry name" value="Ribosomal_bS6"/>
</dbReference>
<dbReference type="InterPro" id="IPR020815">
    <property type="entry name" value="Ribosomal_bS6_CS"/>
</dbReference>
<dbReference type="InterPro" id="IPR035980">
    <property type="entry name" value="Ribosomal_bS6_sf"/>
</dbReference>
<dbReference type="InterPro" id="IPR020814">
    <property type="entry name" value="Ribosomal_S6_plastid/chlpt"/>
</dbReference>
<dbReference type="InterPro" id="IPR014717">
    <property type="entry name" value="Transl_elong_EF1B/ribsomal_bS6"/>
</dbReference>
<dbReference type="NCBIfam" id="TIGR00166">
    <property type="entry name" value="S6"/>
    <property type="match status" value="1"/>
</dbReference>
<dbReference type="PANTHER" id="PTHR21011">
    <property type="entry name" value="MITOCHONDRIAL 28S RIBOSOMAL PROTEIN S6"/>
    <property type="match status" value="1"/>
</dbReference>
<dbReference type="PANTHER" id="PTHR21011:SF1">
    <property type="entry name" value="SMALL RIBOSOMAL SUBUNIT PROTEIN BS6M"/>
    <property type="match status" value="1"/>
</dbReference>
<dbReference type="Pfam" id="PF01250">
    <property type="entry name" value="Ribosomal_S6"/>
    <property type="match status" value="1"/>
</dbReference>
<dbReference type="SUPFAM" id="SSF54995">
    <property type="entry name" value="Ribosomal protein S6"/>
    <property type="match status" value="1"/>
</dbReference>
<dbReference type="PROSITE" id="PS01048">
    <property type="entry name" value="RIBOSOMAL_S6"/>
    <property type="match status" value="1"/>
</dbReference>
<keyword id="KW-1185">Reference proteome</keyword>
<keyword id="KW-0687">Ribonucleoprotein</keyword>
<keyword id="KW-0689">Ribosomal protein</keyword>
<keyword id="KW-0694">RNA-binding</keyword>
<keyword id="KW-0699">rRNA-binding</keyword>
<sequence>MRHYEIVLMIHTDQSDQISNIIEHYTKMIKINKGSIHRLEDWGRRQLAYPIKKLNKAHYILMNIETSTKVLNNIIQDLNLNNFIIRNMIMRVKNAINEPSPMKKTKENKELNN</sequence>
<gene>
    <name evidence="1" type="primary">rpsF</name>
    <name type="ordered locus">WIGBR2620</name>
</gene>
<feature type="chain" id="PRO_0000176875" description="Small ribosomal subunit protein bS6">
    <location>
        <begin position="1"/>
        <end position="113"/>
    </location>
</feature>
<evidence type="ECO:0000255" key="1">
    <source>
        <dbReference type="HAMAP-Rule" id="MF_00360"/>
    </source>
</evidence>
<evidence type="ECO:0000305" key="2"/>